<proteinExistence type="inferred from homology"/>
<keyword id="KW-0963">Cytoplasm</keyword>
<keyword id="KW-0539">Nucleus</keyword>
<keyword id="KW-0653">Protein transport</keyword>
<keyword id="KW-1185">Reference proteome</keyword>
<keyword id="KW-0813">Transport</keyword>
<accession>Q55CX9</accession>
<gene>
    <name type="ORF">DDB_G0269860</name>
</gene>
<name>IPO7_DICDI</name>
<reference key="1">
    <citation type="journal article" date="2005" name="Nature">
        <title>The genome of the social amoeba Dictyostelium discoideum.</title>
        <authorList>
            <person name="Eichinger L."/>
            <person name="Pachebat J.A."/>
            <person name="Gloeckner G."/>
            <person name="Rajandream M.A."/>
            <person name="Sucgang R."/>
            <person name="Berriman M."/>
            <person name="Song J."/>
            <person name="Olsen R."/>
            <person name="Szafranski K."/>
            <person name="Xu Q."/>
            <person name="Tunggal B."/>
            <person name="Kummerfeld S."/>
            <person name="Madera M."/>
            <person name="Konfortov B.A."/>
            <person name="Rivero F."/>
            <person name="Bankier A.T."/>
            <person name="Lehmann R."/>
            <person name="Hamlin N."/>
            <person name="Davies R."/>
            <person name="Gaudet P."/>
            <person name="Fey P."/>
            <person name="Pilcher K."/>
            <person name="Chen G."/>
            <person name="Saunders D."/>
            <person name="Sodergren E.J."/>
            <person name="Davis P."/>
            <person name="Kerhornou A."/>
            <person name="Nie X."/>
            <person name="Hall N."/>
            <person name="Anjard C."/>
            <person name="Hemphill L."/>
            <person name="Bason N."/>
            <person name="Farbrother P."/>
            <person name="Desany B."/>
            <person name="Just E."/>
            <person name="Morio T."/>
            <person name="Rost R."/>
            <person name="Churcher C.M."/>
            <person name="Cooper J."/>
            <person name="Haydock S."/>
            <person name="van Driessche N."/>
            <person name="Cronin A."/>
            <person name="Goodhead I."/>
            <person name="Muzny D.M."/>
            <person name="Mourier T."/>
            <person name="Pain A."/>
            <person name="Lu M."/>
            <person name="Harper D."/>
            <person name="Lindsay R."/>
            <person name="Hauser H."/>
            <person name="James K.D."/>
            <person name="Quiles M."/>
            <person name="Madan Babu M."/>
            <person name="Saito T."/>
            <person name="Buchrieser C."/>
            <person name="Wardroper A."/>
            <person name="Felder M."/>
            <person name="Thangavelu M."/>
            <person name="Johnson D."/>
            <person name="Knights A."/>
            <person name="Loulseged H."/>
            <person name="Mungall K.L."/>
            <person name="Oliver K."/>
            <person name="Price C."/>
            <person name="Quail M.A."/>
            <person name="Urushihara H."/>
            <person name="Hernandez J."/>
            <person name="Rabbinowitsch E."/>
            <person name="Steffen D."/>
            <person name="Sanders M."/>
            <person name="Ma J."/>
            <person name="Kohara Y."/>
            <person name="Sharp S."/>
            <person name="Simmonds M.N."/>
            <person name="Spiegler S."/>
            <person name="Tivey A."/>
            <person name="Sugano S."/>
            <person name="White B."/>
            <person name="Walker D."/>
            <person name="Woodward J.R."/>
            <person name="Winckler T."/>
            <person name="Tanaka Y."/>
            <person name="Shaulsky G."/>
            <person name="Schleicher M."/>
            <person name="Weinstock G.M."/>
            <person name="Rosenthal A."/>
            <person name="Cox E.C."/>
            <person name="Chisholm R.L."/>
            <person name="Gibbs R.A."/>
            <person name="Loomis W.F."/>
            <person name="Platzer M."/>
            <person name="Kay R.R."/>
            <person name="Williams J.G."/>
            <person name="Dear P.H."/>
            <person name="Noegel A.A."/>
            <person name="Barrell B.G."/>
            <person name="Kuspa A."/>
        </authorList>
    </citation>
    <scope>NUCLEOTIDE SEQUENCE [LARGE SCALE GENOMIC DNA]</scope>
    <source>
        <strain>AX4</strain>
    </source>
</reference>
<comment type="function">
    <text evidence="1">May function in nuclear protein import.</text>
</comment>
<comment type="subcellular location">
    <subcellularLocation>
        <location evidence="1">Cytoplasm</location>
    </subcellularLocation>
    <subcellularLocation>
        <location evidence="1">Nucleus</location>
    </subcellularLocation>
</comment>
<comment type="similarity">
    <text evidence="4">Belongs to the importin beta family.</text>
</comment>
<protein>
    <recommendedName>
        <fullName>Probable importin-7 homolog</fullName>
    </recommendedName>
</protein>
<evidence type="ECO:0000250" key="1"/>
<evidence type="ECO:0000255" key="2">
    <source>
        <dbReference type="PROSITE-ProRule" id="PRU00115"/>
    </source>
</evidence>
<evidence type="ECO:0000256" key="3">
    <source>
        <dbReference type="SAM" id="MobiDB-lite"/>
    </source>
</evidence>
<evidence type="ECO:0000305" key="4"/>
<organism>
    <name type="scientific">Dictyostelium discoideum</name>
    <name type="common">Social amoeba</name>
    <dbReference type="NCBI Taxonomy" id="44689"/>
    <lineage>
        <taxon>Eukaryota</taxon>
        <taxon>Amoebozoa</taxon>
        <taxon>Evosea</taxon>
        <taxon>Eumycetozoa</taxon>
        <taxon>Dictyostelia</taxon>
        <taxon>Dictyosteliales</taxon>
        <taxon>Dictyosteliaceae</taxon>
        <taxon>Dictyostelium</taxon>
    </lineage>
</organism>
<sequence length="1065" mass="123614">MDPIIQTIQLFQHTLHHDANVIKAAEAQLQQIKVTDGYSRILLKILASNEVDISIRQGVSIFLKNMIITKWRGAEDESPITQEDAEFIKENLIDLLVHSHHLVQNQIEAMIEIIANRDFPEKWTSLLPKSIQYINTQDVKLILAGLTSIQLGIKRFRYVTMGDKKKELLYTIVNEIFPLLLQILEFLSQHQTIESALMQKKVIKIFGYAIHFEIPDLLIQPEVFNKWLSQFVRIIQRPITPQENVKHADDCRKNQWWLLKRTTAKLLNLLFRKSATSVRSTDHSSVKALNKLFMPVYSVEVMKVFYEQLSTLEQLYKGVHYERYQQKLIEYFSFAIKYGVTYVAMKPWLSTLIQQVLFPIICFNDRDAELWECDPNEFLRSQFESSMTFATARIEVLNFIIDVVGKRGRANLDMIMGFCIQSLNKYNAATNASEKNPREKDGVLVIISVLSAYLKNISFYKSNLEQMLLLHVFPELSSPHGFLKARACSLFSEFYNIEFTDPVYFSNALKLILGLMSDNDLPVRVKAGTSICNLVRANQGVDELRPILPQLLDKIFSLLSEAESEDLVIAIESIIQRFKHEIAPYAVNLCKNLSEQFLRLLELEESDESGESGFASQECLGVYCTLLRALKDIPDVFNSLEQQIVPILQKLFTSDHMMYLDEALRILTFVTYYPKSISPLVWSLFPQIMNLFDECACDFASSYVNPLDNYISYGTEYFLSNQQYIEMVFNMYKKMVGDINQQPVDAGDCCKIMESLIQRAKGRIDYMIVPVLELACGRLLNTDKNNQKSKEFTVYLLEIIANCIYYNPLISTQYLESKNLVEPIFGLWFNRIKHFQRFYDKKISVLAFSSLLTLNPSPNFVKFGTSLILEKMLQFTKDMLSIEKELDKQEAEREQKIKDGTLKPEEEEFIDENDEEDYFDNHKFEFEFTEIPDNQDCQHDDEGEVFLDDIEKATEYFENGGDLGEDEGDNFDDQNDDDDQDSEEDLFEDEDTPDFETPIDEVDGFEFMINSIQNFFQINPTCIQQISEKQQEKIKKYVASAPARKEKLRLEKEKEEKLKQQQQKK</sequence>
<dbReference type="EMBL" id="AAFI02000005">
    <property type="protein sequence ID" value="EAL72280.1"/>
    <property type="molecule type" value="Genomic_DNA"/>
</dbReference>
<dbReference type="RefSeq" id="XP_646352.1">
    <property type="nucleotide sequence ID" value="XM_641260.1"/>
</dbReference>
<dbReference type="SMR" id="Q55CX9"/>
<dbReference type="FunCoup" id="Q55CX9">
    <property type="interactions" value="1114"/>
</dbReference>
<dbReference type="STRING" id="44689.Q55CX9"/>
<dbReference type="PaxDb" id="44689-DDB0190623"/>
<dbReference type="EnsemblProtists" id="EAL72280">
    <property type="protein sequence ID" value="EAL72280"/>
    <property type="gene ID" value="DDB_G0269860"/>
</dbReference>
<dbReference type="GeneID" id="8617307"/>
<dbReference type="KEGG" id="ddi:DDB_G0269860"/>
<dbReference type="dictyBase" id="DDB_G0269860"/>
<dbReference type="VEuPathDB" id="AmoebaDB:DDB_G0269860"/>
<dbReference type="eggNOG" id="KOG1991">
    <property type="taxonomic scope" value="Eukaryota"/>
</dbReference>
<dbReference type="HOGENOM" id="CLU_004196_1_0_1"/>
<dbReference type="InParanoid" id="Q55CX9"/>
<dbReference type="OMA" id="WVAKTSW"/>
<dbReference type="PhylomeDB" id="Q55CX9"/>
<dbReference type="PRO" id="PR:Q55CX9"/>
<dbReference type="Proteomes" id="UP000002195">
    <property type="component" value="Chromosome 1"/>
</dbReference>
<dbReference type="GO" id="GO:0005829">
    <property type="term" value="C:cytosol"/>
    <property type="evidence" value="ECO:0000318"/>
    <property type="project" value="GO_Central"/>
</dbReference>
<dbReference type="GO" id="GO:0005635">
    <property type="term" value="C:nuclear envelope"/>
    <property type="evidence" value="ECO:0000318"/>
    <property type="project" value="GO_Central"/>
</dbReference>
<dbReference type="GO" id="GO:0031267">
    <property type="term" value="F:small GTPase binding"/>
    <property type="evidence" value="ECO:0007669"/>
    <property type="project" value="InterPro"/>
</dbReference>
<dbReference type="GO" id="GO:0006606">
    <property type="term" value="P:protein import into nucleus"/>
    <property type="evidence" value="ECO:0000318"/>
    <property type="project" value="GO_Central"/>
</dbReference>
<dbReference type="FunFam" id="1.25.10.10:FF:001583">
    <property type="entry name" value="Probable importin-7 homolog"/>
    <property type="match status" value="1"/>
</dbReference>
<dbReference type="Gene3D" id="1.25.10.10">
    <property type="entry name" value="Leucine-rich Repeat Variant"/>
    <property type="match status" value="1"/>
</dbReference>
<dbReference type="InterPro" id="IPR011989">
    <property type="entry name" value="ARM-like"/>
</dbReference>
<dbReference type="InterPro" id="IPR016024">
    <property type="entry name" value="ARM-type_fold"/>
</dbReference>
<dbReference type="InterPro" id="IPR001494">
    <property type="entry name" value="Importin-beta_N"/>
</dbReference>
<dbReference type="InterPro" id="IPR013713">
    <property type="entry name" value="XPO2_central"/>
</dbReference>
<dbReference type="PANTHER" id="PTHR10997:SF18">
    <property type="entry name" value="D-IMPORTIN 7_RANBP7"/>
    <property type="match status" value="1"/>
</dbReference>
<dbReference type="PANTHER" id="PTHR10997">
    <property type="entry name" value="IMPORTIN-7, 8, 11"/>
    <property type="match status" value="1"/>
</dbReference>
<dbReference type="Pfam" id="PF08506">
    <property type="entry name" value="Cse1"/>
    <property type="match status" value="1"/>
</dbReference>
<dbReference type="Pfam" id="PF03810">
    <property type="entry name" value="IBN_N"/>
    <property type="match status" value="1"/>
</dbReference>
<dbReference type="SMART" id="SM00913">
    <property type="entry name" value="IBN_N"/>
    <property type="match status" value="1"/>
</dbReference>
<dbReference type="SUPFAM" id="SSF48371">
    <property type="entry name" value="ARM repeat"/>
    <property type="match status" value="1"/>
</dbReference>
<dbReference type="PROSITE" id="PS50166">
    <property type="entry name" value="IMPORTIN_B_NT"/>
    <property type="match status" value="1"/>
</dbReference>
<feature type="chain" id="PRO_0000342089" description="Probable importin-7 homolog">
    <location>
        <begin position="1"/>
        <end position="1065"/>
    </location>
</feature>
<feature type="domain" description="Importin N-terminal" evidence="2">
    <location>
        <begin position="25"/>
        <end position="98"/>
    </location>
</feature>
<feature type="region of interest" description="Disordered" evidence="3">
    <location>
        <begin position="958"/>
        <end position="996"/>
    </location>
</feature>
<feature type="compositionally biased region" description="Acidic residues" evidence="3">
    <location>
        <begin position="963"/>
        <end position="996"/>
    </location>
</feature>